<sequence>MDTTHNDNTPQRLMITDMRPLSLETIITSLTRDIITHKFIYLINHECIVRKLDERQATFTFLVNYEMKLLHKVGSTKYKKYTEYNTKYGTFPMPIFINHDGFLECIGIKPTKHTPIIYKYDLNP</sequence>
<organism>
    <name type="scientific">Human respiratory syncytial virus A (strain A2)</name>
    <dbReference type="NCBI Taxonomy" id="11259"/>
    <lineage>
        <taxon>Viruses</taxon>
        <taxon>Riboviria</taxon>
        <taxon>Orthornavirae</taxon>
        <taxon>Negarnaviricota</taxon>
        <taxon>Haploviricotina</taxon>
        <taxon>Monjiviricetes</taxon>
        <taxon>Mononegavirales</taxon>
        <taxon>Pneumoviridae</taxon>
        <taxon>Orthopneumovirus</taxon>
        <taxon>Orthopneumovirus hominis</taxon>
    </lineage>
</organism>
<organismHost>
    <name type="scientific">Homo sapiens</name>
    <name type="common">Human</name>
    <dbReference type="NCBI Taxonomy" id="9606"/>
</organismHost>
<protein>
    <recommendedName>
        <fullName>Non-structural protein 2</fullName>
        <shortName>NS2</shortName>
    </recommendedName>
    <alternativeName>
        <fullName>Non-structural protein 1B</fullName>
    </alternativeName>
</protein>
<dbReference type="EMBL" id="M11486">
    <property type="protein sequence ID" value="AAB59851.1"/>
    <property type="molecule type" value="Genomic_RNA"/>
</dbReference>
<dbReference type="EMBL" id="U50362">
    <property type="protein sequence ID" value="AAB86657.1"/>
    <property type="molecule type" value="Genomic_RNA"/>
</dbReference>
<dbReference type="EMBL" id="U50363">
    <property type="protein sequence ID" value="AAB86669.1"/>
    <property type="molecule type" value="Genomic_RNA"/>
</dbReference>
<dbReference type="EMBL" id="U63644">
    <property type="protein sequence ID" value="AAC55963.1"/>
    <property type="molecule type" value="Genomic_RNA"/>
</dbReference>
<dbReference type="EMBL" id="AF035006">
    <property type="protein sequence ID" value="AAC14895.1"/>
    <property type="molecule type" value="Genomic_RNA"/>
</dbReference>
<dbReference type="PIR" id="B94336">
    <property type="entry name" value="MNNZ1B"/>
</dbReference>
<dbReference type="SMR" id="P04543"/>
<dbReference type="IntAct" id="P04543">
    <property type="interactions" value="1"/>
</dbReference>
<dbReference type="Reactome" id="R-HSA-9828721">
    <property type="pathway name" value="Translation of respiratory syncytial virus mRNAs"/>
</dbReference>
<dbReference type="Reactome" id="R-HSA-9828806">
    <property type="pathway name" value="Maturation of hRSV A proteins"/>
</dbReference>
<dbReference type="Reactome" id="R-HSA-9833109">
    <property type="pathway name" value="Evasion by RSV of host interferon responses"/>
</dbReference>
<dbReference type="Reactome" id="R-HSA-9833110">
    <property type="pathway name" value="RSV-host interactions"/>
</dbReference>
<dbReference type="Proteomes" id="UP000007678">
    <property type="component" value="Genome"/>
</dbReference>
<dbReference type="Proteomes" id="UP000134464">
    <property type="component" value="Genome"/>
</dbReference>
<dbReference type="Proteomes" id="UP000181145">
    <property type="component" value="Genome"/>
</dbReference>
<dbReference type="Proteomes" id="UP000181262">
    <property type="component" value="Genome"/>
</dbReference>
<dbReference type="Proteomes" id="UP000181559">
    <property type="component" value="Genome"/>
</dbReference>
<dbReference type="GO" id="GO:0033650">
    <property type="term" value="C:host cell mitochondrion"/>
    <property type="evidence" value="ECO:0007669"/>
    <property type="project" value="UniProtKB-SubCell"/>
</dbReference>
<dbReference type="GO" id="GO:0052150">
    <property type="term" value="P:symbiont-mediated perturbation of host apoptosis"/>
    <property type="evidence" value="ECO:0007669"/>
    <property type="project" value="UniProtKB-KW"/>
</dbReference>
<dbReference type="GO" id="GO:0039548">
    <property type="term" value="P:symbiont-mediated suppression of host cytoplasmic pattern recognition receptor signaling pathway via inhibition of IRF3 activity"/>
    <property type="evidence" value="ECO:0007669"/>
    <property type="project" value="UniProtKB-KW"/>
</dbReference>
<dbReference type="GO" id="GO:0039557">
    <property type="term" value="P:symbiont-mediated suppression of host cytoplasmic pattern recognition receptor signaling pathway via inhibition of IRF7 activity"/>
    <property type="evidence" value="ECO:0007669"/>
    <property type="project" value="UniProtKB-KW"/>
</dbReference>
<dbReference type="GO" id="GO:0039540">
    <property type="term" value="P:symbiont-mediated suppression of host cytoplasmic pattern recognition receptor signaling pathway via inhibition of RIG-I activity"/>
    <property type="evidence" value="ECO:0007669"/>
    <property type="project" value="UniProtKB-KW"/>
</dbReference>
<dbReference type="GO" id="GO:0039723">
    <property type="term" value="P:symbiont-mediated suppression of host cytoplasmic pattern recognition receptor signaling pathway via inhibition of TBK1 activity"/>
    <property type="evidence" value="ECO:0007669"/>
    <property type="project" value="UniProtKB-KW"/>
</dbReference>
<dbReference type="GO" id="GO:0039564">
    <property type="term" value="P:symbiont-mediated suppression of host JAK-STAT cascade via inhibition of STAT2 activity"/>
    <property type="evidence" value="ECO:0007669"/>
    <property type="project" value="UniProtKB-KW"/>
</dbReference>
<dbReference type="GO" id="GO:0039722">
    <property type="term" value="P:symbiont-mediated suppression of host toll-like receptor signaling pathway"/>
    <property type="evidence" value="ECO:0007669"/>
    <property type="project" value="UniProtKB-KW"/>
</dbReference>
<dbReference type="GO" id="GO:0039502">
    <property type="term" value="P:symbiont-mediated suppression of host type I interferon-mediated signaling pathway"/>
    <property type="evidence" value="ECO:0007669"/>
    <property type="project" value="UniProtKB-KW"/>
</dbReference>
<dbReference type="InterPro" id="IPR004336">
    <property type="entry name" value="RSV_NS2"/>
</dbReference>
<dbReference type="Pfam" id="PF03113">
    <property type="entry name" value="RSV_NS2"/>
    <property type="match status" value="1"/>
</dbReference>
<feature type="chain" id="PRO_0000142789" description="Non-structural protein 2">
    <location>
        <begin position="1"/>
        <end position="124"/>
    </location>
</feature>
<feature type="short sequence motif" description="DLNP; interaction with MAP1B" evidence="6">
    <location>
        <begin position="121"/>
        <end position="124"/>
    </location>
</feature>
<feature type="sequence conflict" description="In Ref. 1; AAB59851." evidence="10" ref="1">
    <original>R</original>
    <variation>K</variation>
    <location>
        <position position="55"/>
    </location>
</feature>
<accession>P04543</accession>
<accession>Q77YB6</accession>
<gene>
    <name type="primary">1B</name>
    <name type="synonym">NS2</name>
</gene>
<keyword id="KW-1045">Host mitochondrion</keyword>
<keyword id="KW-0945">Host-virus interaction</keyword>
<keyword id="KW-1090">Inhibition of host innate immune response by virus</keyword>
<keyword id="KW-1114">Inhibition of host interferon signaling pathway by virus</keyword>
<keyword id="KW-1092">Inhibition of host IRF3 by virus</keyword>
<keyword id="KW-1093">Inhibition of host IRF7 by virus</keyword>
<keyword id="KW-1088">Inhibition of host RIG-I by virus</keyword>
<keyword id="KW-1113">Inhibition of host RLR pathway by virus</keyword>
<keyword id="KW-1106">Inhibition of host STAT2 by virus</keyword>
<keyword id="KW-1223">Inhibition of host TBK1 by virus</keyword>
<keyword id="KW-1225">Inhibition of host TLR pathway by virus</keyword>
<keyword id="KW-0922">Interferon antiviral system evasion</keyword>
<keyword id="KW-1119">Modulation of host cell apoptosis by virus</keyword>
<keyword id="KW-0899">Viral immunoevasion</keyword>
<evidence type="ECO:0000269" key="1">
    <source>
    </source>
</evidence>
<evidence type="ECO:0000269" key="2">
    <source>
    </source>
</evidence>
<evidence type="ECO:0000269" key="3">
    <source>
    </source>
</evidence>
<evidence type="ECO:0000269" key="4">
    <source>
    </source>
</evidence>
<evidence type="ECO:0000269" key="5">
    <source>
    </source>
</evidence>
<evidence type="ECO:0000269" key="6">
    <source>
    </source>
</evidence>
<evidence type="ECO:0000269" key="7">
    <source>
    </source>
</evidence>
<evidence type="ECO:0000269" key="8">
    <source>
    </source>
</evidence>
<evidence type="ECO:0000269" key="9">
    <source>
    </source>
</evidence>
<evidence type="ECO:0000305" key="10"/>
<comment type="function">
    <text evidence="1 2 3 4 5 7 8">Plays a major role in antagonizing the type I IFN-mediated antiviral response (PubMed:15047850). Acts cooperatively with NS1 to repress activation and nuclear translocation of host IFN-regulatory factor IRF3 (PubMed:15827150). Interacts with the host cytoplasmic sensor of viral nucleic acids RIGI and prevents the interaction with its downstream partner MAVS (PubMed:19193793). Together with NS2, participates in the proteasomal degradation of host STAT2, IRF3, IRF7, TBK1 and RIGI through a NS-degradasome involving CUL2 and Elongin-C (PubMed:17251292, PubMed:23877405). The degradasome requires an intact mitochondrial MAVS (PubMed:23877405). Induces host SOCS1 expression (PubMed:26557722). Induces activation of NF-kappa-B. Suppresses premature apoptosis by an NF-kappa-B-dependent, interferon-independent mechanism promoting continued viral replication (PubMed:17151097).</text>
</comment>
<comment type="subunit">
    <text evidence="5 6 9">Monomer (instable) (PubMed:8864205). Homomultimer (PubMed:8864205). Heteromultimer with NS1 (PubMed:21795342). Interacts with host RIGI (via N-terminus); this interaction prevents host signaling pathway involved in interferon production (PubMed:19193793). Interacts with host MAP1B/microtubule-associated protein 1B (PubMed:21795342).</text>
</comment>
<comment type="interaction">
    <interactant intactId="EBI-3648048">
        <id>P04543</id>
    </interactant>
    <interactant intactId="EBI-995350">
        <id>O95786</id>
        <label>RIGI</label>
    </interactant>
    <organismsDiffer>true</organismsDiffer>
    <experiments>2</experiments>
</comment>
<comment type="subcellular location">
    <subcellularLocation>
        <location evidence="6 7">Host mitochondrion</location>
    </subcellularLocation>
    <text evidence="6 7">Most NS2 resides in the mitochondria as a heteromer with NS1.</text>
</comment>
<comment type="domain">
    <text evidence="6">The DNLP motif has IFN suppressive functions like binding to host MAP1B.</text>
</comment>
<comment type="similarity">
    <text evidence="10">Belongs to the pneumovirus non-structural protein 2 family.</text>
</comment>
<proteinExistence type="evidence at protein level"/>
<reference key="1">
    <citation type="journal article" date="1985" name="Virology">
        <title>Nucleotide sequences of the 1B and 1C nonstructural protein mRNAs of human respiratory syncytial virus.</title>
        <authorList>
            <person name="Collins P.L."/>
            <person name="Wertz G.W."/>
        </authorList>
    </citation>
    <scope>NUCLEOTIDE SEQUENCE [GENOMIC RNA]</scope>
</reference>
<reference key="2">
    <citation type="journal article" date="1985" name="J. Virol.">
        <title>mRNA sequence of three respiratory syncytial virus genes encoding two nonstructural proteins and a 22K structural protein.</title>
        <authorList>
            <person name="Elango N."/>
            <person name="Satake M."/>
            <person name="Venkatesan S."/>
        </authorList>
    </citation>
    <scope>NUCLEOTIDE SEQUENCE [GENOMIC RNA]</scope>
</reference>
<reference key="3">
    <citation type="journal article" date="1995" name="Virology">
        <title>A cold-passaged, attenuated strain of human respiratory syncytial virus contains mutations in the F and L genes.</title>
        <authorList>
            <person name="Connors M."/>
            <person name="Crowe J.E. Jr."/>
            <person name="Firestone C.Y."/>
            <person name="Murphy B.R."/>
            <person name="Collins P.L."/>
        </authorList>
    </citation>
    <scope>NUCLEOTIDE SEQUENCE [GENOMIC RNA]</scope>
</reference>
<reference key="4">
    <citation type="journal article" date="1996" name="Virus Genes">
        <title>Acquisition of the ts phenotype by a chemically mutagenized cold-passaged human respiratory syncytial virus vaccine candidate results from the acquisition of a single mutation in the polymerase (L) gene.</title>
        <authorList>
            <person name="Crowe J.E. Jr."/>
            <person name="Firestone C.Y."/>
            <person name="Whitehead S.S."/>
            <person name="Collins P.L."/>
            <person name="Murphy B.R."/>
        </authorList>
    </citation>
    <scope>NUCLEOTIDE SEQUENCE [GENOMIC RNA]</scope>
</reference>
<reference key="5">
    <citation type="journal article" date="1998" name="J. Virol.">
        <title>Recombinant respiratory syncytial virus (RSV) bearing a set of mutations from cold-passaged RSV is attenuated in chimpanzees.</title>
        <authorList>
            <person name="Whitehead S.S."/>
            <person name="Juhasz K."/>
            <person name="Firestone C.Y."/>
            <person name="Collins P.L."/>
            <person name="Murphy B.R."/>
        </authorList>
    </citation>
    <scope>NUCLEOTIDE SEQUENCE [GENOMIC RNA]</scope>
    <source>
        <strain>Cold-passage attenuated</strain>
    </source>
</reference>
<reference key="6">
    <citation type="journal article" date="1996" name="Virus Res.">
        <title>Expression and characterisation of the NS1 and NS2 proteins of respiratory syncytial virus.</title>
        <authorList>
            <person name="Evans J.E."/>
            <person name="Cane P.A."/>
            <person name="Pringle C.R."/>
        </authorList>
    </citation>
    <scope>SUBUNIT</scope>
</reference>
<reference key="7">
    <citation type="journal article" date="2004" name="J. Virol.">
        <title>Suppression of the induction of alpha, beta, and lambda interferons by the NS1 and NS2 proteins of human respiratory syncytial virus in human epithelial cells and macrophages.</title>
        <authorList>
            <person name="Spann K.M."/>
            <person name="Tran K.C."/>
            <person name="Chi B."/>
            <person name="Rabin R.L."/>
            <person name="Collins P.L."/>
        </authorList>
    </citation>
    <scope>FUNCTION</scope>
</reference>
<reference key="8">
    <citation type="journal article" date="2005" name="J. Virol.">
        <title>Effects of nonstructural proteins NS1 and NS2 of human respiratory syncytial virus on interferon regulatory factor 3, NF-kappaB, and proinflammatory cytokines.</title>
        <authorList>
            <person name="Spann K.M."/>
            <person name="Tran K.C."/>
            <person name="Collins P.L."/>
        </authorList>
    </citation>
    <scope>FUNCTION</scope>
</reference>
<reference key="9">
    <citation type="journal article" date="2007" name="J. Virol.">
        <title>Nonstructural proteins of respiratory syncytial virus suppress premature apoptosis by an NF-kappaB-dependent, interferon-independent mechanism and facilitate virus growth.</title>
        <authorList>
            <person name="Bitko V."/>
            <person name="Shulyayeva O."/>
            <person name="Mazumder B."/>
            <person name="Musiyenko A."/>
            <person name="Ramaswamy M."/>
            <person name="Look D.C."/>
            <person name="Barik S."/>
        </authorList>
    </citation>
    <scope>FUNCTION</scope>
</reference>
<reference key="10">
    <citation type="journal article" date="2007" name="J. Virol.">
        <title>Respiratory syncytial virus NS1 protein degrades STAT2 by using the Elongin-Cullin E3 ligase.</title>
        <authorList>
            <person name="Elliott J."/>
            <person name="Lynch O.T."/>
            <person name="Suessmuth Y."/>
            <person name="Qian P."/>
            <person name="Boyd C.R."/>
            <person name="Burrows J.F."/>
            <person name="Buick R."/>
            <person name="Stevenson N.J."/>
            <person name="Touzelet O."/>
            <person name="Gadina M."/>
            <person name="Power U.F."/>
            <person name="Johnston J.A."/>
        </authorList>
    </citation>
    <scope>FUNCTION</scope>
</reference>
<reference key="11">
    <citation type="journal article" date="2009" name="J. Virol.">
        <title>Human respiratory syncytial virus nonstructural protein NS2 antagonizes the activation of beta interferon transcription by interacting with RIG-I.</title>
        <authorList>
            <person name="Ling Z."/>
            <person name="Tran K.C."/>
            <person name="Teng M.N."/>
        </authorList>
    </citation>
    <scope>FUNCTION</scope>
    <scope>INTERACTION WITH HOST RIGI</scope>
</reference>
<reference key="12">
    <citation type="journal article" date="2011" name="J. Virol.">
        <title>Multiple functional domains and complexes of the two nonstructural proteins of human respiratory syncytial virus contribute to interferon suppression and cellular location.</title>
        <authorList>
            <person name="Swedan S."/>
            <person name="Andrews J."/>
            <person name="Majumdar T."/>
            <person name="Musiyenko A."/>
            <person name="Barik S."/>
        </authorList>
    </citation>
    <scope>SUBCELLULAR LOCATION</scope>
    <scope>DOMAIN</scope>
    <scope>SUBUNIT</scope>
    <scope>INTERACTION WITH HOST MAP1B</scope>
    <scope>INTERACTION WITH NS1</scope>
</reference>
<reference key="13">
    <citation type="journal article" date="2013" name="Cell Res.">
        <title>Viral degradasome hijacks mitochondria to suppress innate immunity.</title>
        <authorList>
            <person name="Goswami R."/>
            <person name="Majumdar T."/>
            <person name="Dhar J."/>
            <person name="Chattopadhyay S."/>
            <person name="Bandyopadhyay S.K."/>
            <person name="Verbovetskaya V."/>
            <person name="Sen G.C."/>
            <person name="Barik S."/>
        </authorList>
    </citation>
    <scope>FUNCTION</scope>
    <scope>SUBCELLULAR LOCATION</scope>
</reference>
<reference key="14">
    <citation type="journal article" date="2015" name="J. Immunol. Res.">
        <title>Respiratory Syncytial Virus Nonstructural Proteins Upregulate SOCS1 and SOCS3 in the Different Manner from Endogenous IFN Signaling.</title>
        <authorList>
            <person name="Zheng J."/>
            <person name="Yang P."/>
            <person name="Tang Y."/>
            <person name="Pan Z."/>
            <person name="Zhao D."/>
        </authorList>
    </citation>
    <scope>FUNCTION</scope>
</reference>
<reference key="15">
    <citation type="journal article" date="2019" name="PLoS Pathog.">
        <title>Respiratory syncytial virus nonstructural proteins 1 and 2: Exceptional disrupters of innate immune responses.</title>
        <authorList>
            <person name="Sedeyn K."/>
            <person name="Schepens B."/>
            <person name="Saelens X."/>
        </authorList>
    </citation>
    <scope>REVIEW</scope>
</reference>
<reference key="16">
    <citation type="journal article" date="2020" name="Front. Cell. Infect. Microbiol.">
        <title>Respiratory Syncytial Virus's Non-structural Proteins: Masters of Interference.</title>
        <authorList>
            <person name="Thornhill E.M."/>
            <person name="Verhoeven D."/>
        </authorList>
    </citation>
    <scope>REVIEW</scope>
</reference>
<name>NS2_HRSVA</name>